<organism>
    <name type="scientific">Sulfurihydrogenibium sp. (strain YO3AOP1)</name>
    <dbReference type="NCBI Taxonomy" id="436114"/>
    <lineage>
        <taxon>Bacteria</taxon>
        <taxon>Pseudomonadati</taxon>
        <taxon>Aquificota</taxon>
        <taxon>Aquificia</taxon>
        <taxon>Aquificales</taxon>
        <taxon>Hydrogenothermaceae</taxon>
        <taxon>Sulfurihydrogenibium</taxon>
    </lineage>
</organism>
<proteinExistence type="inferred from homology"/>
<keyword id="KW-0342">GTP-binding</keyword>
<keyword id="KW-0378">Hydrolase</keyword>
<keyword id="KW-0479">Metal-binding</keyword>
<keyword id="KW-0547">Nucleotide-binding</keyword>
<keyword id="KW-0554">One-carbon metabolism</keyword>
<keyword id="KW-0862">Zinc</keyword>
<gene>
    <name evidence="1" type="primary">folE</name>
    <name type="ordered locus">SYO3AOP1_1048</name>
</gene>
<comment type="catalytic activity">
    <reaction evidence="1">
        <text>GTP + H2O = 7,8-dihydroneopterin 3'-triphosphate + formate + H(+)</text>
        <dbReference type="Rhea" id="RHEA:17473"/>
        <dbReference type="ChEBI" id="CHEBI:15377"/>
        <dbReference type="ChEBI" id="CHEBI:15378"/>
        <dbReference type="ChEBI" id="CHEBI:15740"/>
        <dbReference type="ChEBI" id="CHEBI:37565"/>
        <dbReference type="ChEBI" id="CHEBI:58462"/>
        <dbReference type="EC" id="3.5.4.16"/>
    </reaction>
</comment>
<comment type="pathway">
    <text evidence="1">Cofactor biosynthesis; 7,8-dihydroneopterin triphosphate biosynthesis; 7,8-dihydroneopterin triphosphate from GTP: step 1/1.</text>
</comment>
<comment type="subunit">
    <text evidence="1">Homomer.</text>
</comment>
<comment type="similarity">
    <text evidence="1">Belongs to the GTP cyclohydrolase I family.</text>
</comment>
<protein>
    <recommendedName>
        <fullName evidence="1">GTP cyclohydrolase 1</fullName>
        <ecNumber evidence="1">3.5.4.16</ecNumber>
    </recommendedName>
    <alternativeName>
        <fullName evidence="1">GTP cyclohydrolase I</fullName>
        <shortName evidence="1">GTP-CH-I</shortName>
    </alternativeName>
</protein>
<name>GCH1_SULSY</name>
<dbReference type="EC" id="3.5.4.16" evidence="1"/>
<dbReference type="EMBL" id="CP001080">
    <property type="protein sequence ID" value="ACD66667.1"/>
    <property type="molecule type" value="Genomic_DNA"/>
</dbReference>
<dbReference type="RefSeq" id="WP_012459735.1">
    <property type="nucleotide sequence ID" value="NC_010730.1"/>
</dbReference>
<dbReference type="SMR" id="B2V9P4"/>
<dbReference type="STRING" id="436114.SYO3AOP1_1048"/>
<dbReference type="KEGG" id="sul:SYO3AOP1_1048"/>
<dbReference type="eggNOG" id="COG0302">
    <property type="taxonomic scope" value="Bacteria"/>
</dbReference>
<dbReference type="HOGENOM" id="CLU_049768_3_1_0"/>
<dbReference type="UniPathway" id="UPA00848">
    <property type="reaction ID" value="UER00151"/>
</dbReference>
<dbReference type="GO" id="GO:0005737">
    <property type="term" value="C:cytoplasm"/>
    <property type="evidence" value="ECO:0007669"/>
    <property type="project" value="TreeGrafter"/>
</dbReference>
<dbReference type="GO" id="GO:0005525">
    <property type="term" value="F:GTP binding"/>
    <property type="evidence" value="ECO:0007669"/>
    <property type="project" value="UniProtKB-KW"/>
</dbReference>
<dbReference type="GO" id="GO:0003934">
    <property type="term" value="F:GTP cyclohydrolase I activity"/>
    <property type="evidence" value="ECO:0007669"/>
    <property type="project" value="UniProtKB-UniRule"/>
</dbReference>
<dbReference type="GO" id="GO:0008270">
    <property type="term" value="F:zinc ion binding"/>
    <property type="evidence" value="ECO:0007669"/>
    <property type="project" value="UniProtKB-UniRule"/>
</dbReference>
<dbReference type="GO" id="GO:0006730">
    <property type="term" value="P:one-carbon metabolic process"/>
    <property type="evidence" value="ECO:0007669"/>
    <property type="project" value="UniProtKB-UniRule"/>
</dbReference>
<dbReference type="GO" id="GO:0006729">
    <property type="term" value="P:tetrahydrobiopterin biosynthetic process"/>
    <property type="evidence" value="ECO:0007669"/>
    <property type="project" value="TreeGrafter"/>
</dbReference>
<dbReference type="GO" id="GO:0046654">
    <property type="term" value="P:tetrahydrofolate biosynthetic process"/>
    <property type="evidence" value="ECO:0007669"/>
    <property type="project" value="UniProtKB-UniRule"/>
</dbReference>
<dbReference type="FunFam" id="1.10.286.10:FF:000001">
    <property type="entry name" value="GTP cyclohydrolase 1"/>
    <property type="match status" value="1"/>
</dbReference>
<dbReference type="FunFam" id="3.30.1130.10:FF:000001">
    <property type="entry name" value="GTP cyclohydrolase 1"/>
    <property type="match status" value="1"/>
</dbReference>
<dbReference type="Gene3D" id="1.10.286.10">
    <property type="match status" value="1"/>
</dbReference>
<dbReference type="Gene3D" id="3.30.1130.10">
    <property type="match status" value="1"/>
</dbReference>
<dbReference type="HAMAP" id="MF_00223">
    <property type="entry name" value="FolE"/>
    <property type="match status" value="1"/>
</dbReference>
<dbReference type="InterPro" id="IPR043133">
    <property type="entry name" value="GTP-CH-I_C/QueF"/>
</dbReference>
<dbReference type="InterPro" id="IPR043134">
    <property type="entry name" value="GTP-CH-I_N"/>
</dbReference>
<dbReference type="InterPro" id="IPR001474">
    <property type="entry name" value="GTP_CycHdrlase_I"/>
</dbReference>
<dbReference type="InterPro" id="IPR018234">
    <property type="entry name" value="GTP_CycHdrlase_I_CS"/>
</dbReference>
<dbReference type="InterPro" id="IPR020602">
    <property type="entry name" value="GTP_CycHdrlase_I_dom"/>
</dbReference>
<dbReference type="NCBIfam" id="TIGR00063">
    <property type="entry name" value="folE"/>
    <property type="match status" value="1"/>
</dbReference>
<dbReference type="NCBIfam" id="NF006825">
    <property type="entry name" value="PRK09347.1-2"/>
    <property type="match status" value="1"/>
</dbReference>
<dbReference type="NCBIfam" id="NF006826">
    <property type="entry name" value="PRK09347.1-3"/>
    <property type="match status" value="1"/>
</dbReference>
<dbReference type="PANTHER" id="PTHR11109:SF7">
    <property type="entry name" value="GTP CYCLOHYDROLASE 1"/>
    <property type="match status" value="1"/>
</dbReference>
<dbReference type="PANTHER" id="PTHR11109">
    <property type="entry name" value="GTP CYCLOHYDROLASE I"/>
    <property type="match status" value="1"/>
</dbReference>
<dbReference type="Pfam" id="PF01227">
    <property type="entry name" value="GTP_cyclohydroI"/>
    <property type="match status" value="1"/>
</dbReference>
<dbReference type="SUPFAM" id="SSF55620">
    <property type="entry name" value="Tetrahydrobiopterin biosynthesis enzymes-like"/>
    <property type="match status" value="1"/>
</dbReference>
<dbReference type="PROSITE" id="PS00859">
    <property type="entry name" value="GTP_CYCLOHYDROL_1_1"/>
    <property type="match status" value="1"/>
</dbReference>
<dbReference type="PROSITE" id="PS00860">
    <property type="entry name" value="GTP_CYCLOHYDROL_1_2"/>
    <property type="match status" value="1"/>
</dbReference>
<accession>B2V9P4</accession>
<feature type="chain" id="PRO_1000100204" description="GTP cyclohydrolase 1">
    <location>
        <begin position="1"/>
        <end position="187"/>
    </location>
</feature>
<feature type="binding site" evidence="1">
    <location>
        <position position="74"/>
    </location>
    <ligand>
        <name>Zn(2+)</name>
        <dbReference type="ChEBI" id="CHEBI:29105"/>
    </ligand>
</feature>
<feature type="binding site" evidence="1">
    <location>
        <position position="77"/>
    </location>
    <ligand>
        <name>Zn(2+)</name>
        <dbReference type="ChEBI" id="CHEBI:29105"/>
    </ligand>
</feature>
<feature type="binding site" evidence="1">
    <location>
        <position position="145"/>
    </location>
    <ligand>
        <name>Zn(2+)</name>
        <dbReference type="ChEBI" id="CHEBI:29105"/>
    </ligand>
</feature>
<evidence type="ECO:0000255" key="1">
    <source>
        <dbReference type="HAMAP-Rule" id="MF_00223"/>
    </source>
</evidence>
<sequence length="187" mass="21802">MVIDKNKIEQAIRLFLEGIGEDPNREGLRDTPKRVAKMWEEFESYREMNMTIFEEVGSYDEMVVVRDIQFYSLCEHHLLPFFGKAHVAYIPDKKVCGLSKIVRVVNKFSYRPQVQERLTAEIAEYLEKELQPKGVAVVMEAVHLCMAMRGVRNPESITVTSKLTGRFLECQKTREEFLNLINSHKKM</sequence>
<reference key="1">
    <citation type="journal article" date="2009" name="J. Bacteriol.">
        <title>Complete and draft genome sequences of six members of the Aquificales.</title>
        <authorList>
            <person name="Reysenbach A.-L."/>
            <person name="Hamamura N."/>
            <person name="Podar M."/>
            <person name="Griffiths E."/>
            <person name="Ferreira S."/>
            <person name="Hochstein R."/>
            <person name="Heidelberg J."/>
            <person name="Johnson J."/>
            <person name="Mead D."/>
            <person name="Pohorille A."/>
            <person name="Sarmiento M."/>
            <person name="Schweighofer K."/>
            <person name="Seshadri R."/>
            <person name="Voytek M.A."/>
        </authorList>
    </citation>
    <scope>NUCLEOTIDE SEQUENCE [LARGE SCALE GENOMIC DNA]</scope>
    <source>
        <strain>YO3AOP1</strain>
    </source>
</reference>